<protein>
    <recommendedName>
        <fullName evidence="1">Fe/S biogenesis protein NfuA</fullName>
    </recommendedName>
</protein>
<dbReference type="EMBL" id="AE003852">
    <property type="protein sequence ID" value="AAF95860.1"/>
    <property type="molecule type" value="Genomic_DNA"/>
</dbReference>
<dbReference type="PIR" id="B82040">
    <property type="entry name" value="B82040"/>
</dbReference>
<dbReference type="RefSeq" id="NP_232347.1">
    <property type="nucleotide sequence ID" value="NC_002505.1"/>
</dbReference>
<dbReference type="RefSeq" id="WP_000070178.1">
    <property type="nucleotide sequence ID" value="NZ_LT906614.1"/>
</dbReference>
<dbReference type="SMR" id="Q9KNL2"/>
<dbReference type="STRING" id="243277.VC_2720"/>
<dbReference type="DNASU" id="2615548"/>
<dbReference type="EnsemblBacteria" id="AAF95860">
    <property type="protein sequence ID" value="AAF95860"/>
    <property type="gene ID" value="VC_2720"/>
</dbReference>
<dbReference type="GeneID" id="89513292"/>
<dbReference type="KEGG" id="vch:VC_2720"/>
<dbReference type="PATRIC" id="fig|243277.26.peg.2595"/>
<dbReference type="eggNOG" id="COG0316">
    <property type="taxonomic scope" value="Bacteria"/>
</dbReference>
<dbReference type="eggNOG" id="COG0694">
    <property type="taxonomic scope" value="Bacteria"/>
</dbReference>
<dbReference type="HOGENOM" id="CLU_094569_0_0_6"/>
<dbReference type="Proteomes" id="UP000000584">
    <property type="component" value="Chromosome 1"/>
</dbReference>
<dbReference type="GO" id="GO:0051539">
    <property type="term" value="F:4 iron, 4 sulfur cluster binding"/>
    <property type="evidence" value="ECO:0000318"/>
    <property type="project" value="GO_Central"/>
</dbReference>
<dbReference type="GO" id="GO:0005506">
    <property type="term" value="F:iron ion binding"/>
    <property type="evidence" value="ECO:0007669"/>
    <property type="project" value="InterPro"/>
</dbReference>
<dbReference type="GO" id="GO:0016226">
    <property type="term" value="P:iron-sulfur cluster assembly"/>
    <property type="evidence" value="ECO:0007669"/>
    <property type="project" value="UniProtKB-UniRule"/>
</dbReference>
<dbReference type="GO" id="GO:0051604">
    <property type="term" value="P:protein maturation"/>
    <property type="evidence" value="ECO:0007669"/>
    <property type="project" value="UniProtKB-UniRule"/>
</dbReference>
<dbReference type="Gene3D" id="3.30.300.130">
    <property type="entry name" value="Fe-S cluster assembly (FSCA)"/>
    <property type="match status" value="1"/>
</dbReference>
<dbReference type="Gene3D" id="2.60.300.12">
    <property type="entry name" value="HesB-like domain"/>
    <property type="match status" value="1"/>
</dbReference>
<dbReference type="HAMAP" id="MF_01637">
    <property type="entry name" value="Fe_S_biogen_NfuA"/>
    <property type="match status" value="1"/>
</dbReference>
<dbReference type="InterPro" id="IPR017726">
    <property type="entry name" value="Fe/S_biogenesis_protein_NfuA"/>
</dbReference>
<dbReference type="InterPro" id="IPR000361">
    <property type="entry name" value="FeS_biogenesis"/>
</dbReference>
<dbReference type="InterPro" id="IPR034904">
    <property type="entry name" value="FSCA_dom_sf"/>
</dbReference>
<dbReference type="InterPro" id="IPR035903">
    <property type="entry name" value="HesB-like_dom_sf"/>
</dbReference>
<dbReference type="InterPro" id="IPR001075">
    <property type="entry name" value="NIF_FeS_clus_asmbl_NifU_C"/>
</dbReference>
<dbReference type="NCBIfam" id="NF008392">
    <property type="entry name" value="PRK11190.1"/>
    <property type="match status" value="1"/>
</dbReference>
<dbReference type="NCBIfam" id="TIGR03341">
    <property type="entry name" value="YhgI_GntY"/>
    <property type="match status" value="1"/>
</dbReference>
<dbReference type="PANTHER" id="PTHR11178:SF51">
    <property type="entry name" value="FE_S BIOGENESIS PROTEIN NFUA"/>
    <property type="match status" value="1"/>
</dbReference>
<dbReference type="PANTHER" id="PTHR11178">
    <property type="entry name" value="IRON-SULFUR CLUSTER SCAFFOLD PROTEIN NFU-RELATED"/>
    <property type="match status" value="1"/>
</dbReference>
<dbReference type="Pfam" id="PF01521">
    <property type="entry name" value="Fe-S_biosyn"/>
    <property type="match status" value="1"/>
</dbReference>
<dbReference type="Pfam" id="PF01106">
    <property type="entry name" value="NifU"/>
    <property type="match status" value="1"/>
</dbReference>
<dbReference type="SUPFAM" id="SSF117916">
    <property type="entry name" value="Fe-S cluster assembly (FSCA) domain-like"/>
    <property type="match status" value="1"/>
</dbReference>
<dbReference type="SUPFAM" id="SSF89360">
    <property type="entry name" value="HesB-like domain"/>
    <property type="match status" value="1"/>
</dbReference>
<gene>
    <name evidence="1" type="primary">nfuA</name>
    <name type="ordered locus">VC_2720</name>
</gene>
<accession>Q9KNL2</accession>
<sequence length="195" mass="21107">MSNPITITESAQSHFAKLLAQQPEGTNIRVFVVNPGTQNAECGVSYCPPEAVEATDTEYPFSGFSAYVDELSLPFLEEAVIDFVTDKMGSQLTLKAPNAKMRKVSDDASLMERVEYALQTQVNPQLAGHGGHVRLISISDDGVALVQFGGGCNGCSMVDVTLKEGIEKELLAQFAGELTAVRDSTEHDRGEHSYY</sequence>
<organism>
    <name type="scientific">Vibrio cholerae serotype O1 (strain ATCC 39315 / El Tor Inaba N16961)</name>
    <dbReference type="NCBI Taxonomy" id="243277"/>
    <lineage>
        <taxon>Bacteria</taxon>
        <taxon>Pseudomonadati</taxon>
        <taxon>Pseudomonadota</taxon>
        <taxon>Gammaproteobacteria</taxon>
        <taxon>Vibrionales</taxon>
        <taxon>Vibrionaceae</taxon>
        <taxon>Vibrio</taxon>
    </lineage>
</organism>
<feature type="chain" id="PRO_0000209485" description="Fe/S biogenesis protein NfuA">
    <location>
        <begin position="1"/>
        <end position="195"/>
    </location>
</feature>
<feature type="binding site" evidence="1">
    <location>
        <position position="152"/>
    </location>
    <ligand>
        <name>[4Fe-4S] cluster</name>
        <dbReference type="ChEBI" id="CHEBI:49883"/>
    </ligand>
</feature>
<feature type="binding site" evidence="1">
    <location>
        <position position="155"/>
    </location>
    <ligand>
        <name>[4Fe-4S] cluster</name>
        <dbReference type="ChEBI" id="CHEBI:49883"/>
    </ligand>
</feature>
<comment type="function">
    <text evidence="1">Involved in iron-sulfur cluster biogenesis. Binds a 4Fe-4S cluster, can transfer this cluster to apoproteins, and thereby intervenes in the maturation of Fe/S proteins. Could also act as a scaffold/chaperone for damaged Fe/S proteins.</text>
</comment>
<comment type="cofactor">
    <cofactor evidence="1">
        <name>[4Fe-4S] cluster</name>
        <dbReference type="ChEBI" id="CHEBI:49883"/>
    </cofactor>
    <text evidence="1">Binds 1 [4Fe-4S] cluster per subunit. The cluster is presumably bound at the interface of two monomers.</text>
</comment>
<comment type="subunit">
    <text evidence="1">Homodimer.</text>
</comment>
<comment type="similarity">
    <text evidence="1">Belongs to the NfuA family.</text>
</comment>
<keyword id="KW-0004">4Fe-4S</keyword>
<keyword id="KW-0408">Iron</keyword>
<keyword id="KW-0411">Iron-sulfur</keyword>
<keyword id="KW-0479">Metal-binding</keyword>
<keyword id="KW-1185">Reference proteome</keyword>
<reference key="1">
    <citation type="journal article" date="2000" name="Nature">
        <title>DNA sequence of both chromosomes of the cholera pathogen Vibrio cholerae.</title>
        <authorList>
            <person name="Heidelberg J.F."/>
            <person name="Eisen J.A."/>
            <person name="Nelson W.C."/>
            <person name="Clayton R.A."/>
            <person name="Gwinn M.L."/>
            <person name="Dodson R.J."/>
            <person name="Haft D.H."/>
            <person name="Hickey E.K."/>
            <person name="Peterson J.D."/>
            <person name="Umayam L.A."/>
            <person name="Gill S.R."/>
            <person name="Nelson K.E."/>
            <person name="Read T.D."/>
            <person name="Tettelin H."/>
            <person name="Richardson D.L."/>
            <person name="Ermolaeva M.D."/>
            <person name="Vamathevan J.J."/>
            <person name="Bass S."/>
            <person name="Qin H."/>
            <person name="Dragoi I."/>
            <person name="Sellers P."/>
            <person name="McDonald L.A."/>
            <person name="Utterback T.R."/>
            <person name="Fleischmann R.D."/>
            <person name="Nierman W.C."/>
            <person name="White O."/>
            <person name="Salzberg S.L."/>
            <person name="Smith H.O."/>
            <person name="Colwell R.R."/>
            <person name="Mekalanos J.J."/>
            <person name="Venter J.C."/>
            <person name="Fraser C.M."/>
        </authorList>
    </citation>
    <scope>NUCLEOTIDE SEQUENCE [LARGE SCALE GENOMIC DNA]</scope>
    <source>
        <strain>ATCC 39315 / El Tor Inaba N16961</strain>
    </source>
</reference>
<proteinExistence type="inferred from homology"/>
<evidence type="ECO:0000255" key="1">
    <source>
        <dbReference type="HAMAP-Rule" id="MF_01637"/>
    </source>
</evidence>
<name>NFUA_VIBCH</name>